<organism>
    <name type="scientific">Synechococcus sp. (strain JA-2-3B'a(2-13))</name>
    <name type="common">Cyanobacteria bacterium Yellowstone B-Prime</name>
    <dbReference type="NCBI Taxonomy" id="321332"/>
    <lineage>
        <taxon>Bacteria</taxon>
        <taxon>Bacillati</taxon>
        <taxon>Cyanobacteriota</taxon>
        <taxon>Cyanophyceae</taxon>
        <taxon>Synechococcales</taxon>
        <taxon>Synechococcaceae</taxon>
        <taxon>Synechococcus</taxon>
    </lineage>
</organism>
<protein>
    <recommendedName>
        <fullName evidence="1">Glutamate--tRNA ligase</fullName>
        <ecNumber evidence="1">6.1.1.17</ecNumber>
    </recommendedName>
    <alternativeName>
        <fullName evidence="1">Glutamyl-tRNA synthetase</fullName>
        <shortName evidence="1">GluRS</shortName>
    </alternativeName>
</protein>
<proteinExistence type="inferred from homology"/>
<keyword id="KW-0030">Aminoacyl-tRNA synthetase</keyword>
<keyword id="KW-0067">ATP-binding</keyword>
<keyword id="KW-0963">Cytoplasm</keyword>
<keyword id="KW-0436">Ligase</keyword>
<keyword id="KW-0547">Nucleotide-binding</keyword>
<keyword id="KW-0648">Protein biosynthesis</keyword>
<keyword id="KW-1185">Reference proteome</keyword>
<accession>Q2JKY3</accession>
<sequence length="479" mass="53767">MSVCVRIAPSPTGNLHIGTARTAVFNWLYARRHGGRFILRIEDTDRDRSLPRYTRNILAGLAWLGLDWDEGPVYQSKRIERYQAVVQQLLDRGLAYRCYVSEAELEEMRAAQKAAGKAPRYDNRHRFLTEAQRRAYEAEGRQPVIRFKIEEPLEVSWVDLIRGPITWNTQDLGGDMVIARADGCPLYNLAVVVDDIDMGITHVIRGEDHIGNTPKQILLYRALGHEPPQFAHSPLILNPEGKKLSKRDGATSVAEFQQLGFLPEALKNYLALLSWSPPDGEELFSLEKAAALFDFDRVNRAAARFDWDKLNWINSQYIKRLSPPELVERLTPFWQAAGFDLSEVPDPTWLEDVARLIADGIDRLAEAPPLSRFLFQEPLSYTLPALEQLRLPGVAEAMAAMATTLAAAELPQVSADSLKPLVDQVAKGQNMKKGLLMKSLRAALTGDLQGPDLLESFALLQRRGWALGRLEAVQKLVPC</sequence>
<name>SYE_SYNJB</name>
<comment type="function">
    <text evidence="1">Catalyzes the attachment of glutamate to tRNA(Glu) in a two-step reaction: glutamate is first activated by ATP to form Glu-AMP and then transferred to the acceptor end of tRNA(Glu).</text>
</comment>
<comment type="catalytic activity">
    <reaction evidence="1">
        <text>tRNA(Glu) + L-glutamate + ATP = L-glutamyl-tRNA(Glu) + AMP + diphosphate</text>
        <dbReference type="Rhea" id="RHEA:23540"/>
        <dbReference type="Rhea" id="RHEA-COMP:9663"/>
        <dbReference type="Rhea" id="RHEA-COMP:9680"/>
        <dbReference type="ChEBI" id="CHEBI:29985"/>
        <dbReference type="ChEBI" id="CHEBI:30616"/>
        <dbReference type="ChEBI" id="CHEBI:33019"/>
        <dbReference type="ChEBI" id="CHEBI:78442"/>
        <dbReference type="ChEBI" id="CHEBI:78520"/>
        <dbReference type="ChEBI" id="CHEBI:456215"/>
        <dbReference type="EC" id="6.1.1.17"/>
    </reaction>
</comment>
<comment type="subunit">
    <text evidence="1">Monomer.</text>
</comment>
<comment type="subcellular location">
    <subcellularLocation>
        <location evidence="1">Cytoplasm</location>
    </subcellularLocation>
</comment>
<comment type="similarity">
    <text evidence="1">Belongs to the class-I aminoacyl-tRNA synthetase family. Glutamate--tRNA ligase type 1 subfamily.</text>
</comment>
<gene>
    <name evidence="1" type="primary">gltX</name>
    <name type="ordered locus">CYB_1680</name>
</gene>
<feature type="chain" id="PRO_0000237411" description="Glutamate--tRNA ligase">
    <location>
        <begin position="1"/>
        <end position="479"/>
    </location>
</feature>
<feature type="short sequence motif" description="'HIGH' region" evidence="1">
    <location>
        <begin position="9"/>
        <end position="19"/>
    </location>
</feature>
<feature type="short sequence motif" description="'KMSKS' region" evidence="1">
    <location>
        <begin position="243"/>
        <end position="247"/>
    </location>
</feature>
<feature type="binding site" evidence="1">
    <location>
        <position position="246"/>
    </location>
    <ligand>
        <name>ATP</name>
        <dbReference type="ChEBI" id="CHEBI:30616"/>
    </ligand>
</feature>
<reference key="1">
    <citation type="journal article" date="2007" name="ISME J.">
        <title>Population level functional diversity in a microbial community revealed by comparative genomic and metagenomic analyses.</title>
        <authorList>
            <person name="Bhaya D."/>
            <person name="Grossman A.R."/>
            <person name="Steunou A.-S."/>
            <person name="Khuri N."/>
            <person name="Cohan F.M."/>
            <person name="Hamamura N."/>
            <person name="Melendrez M.C."/>
            <person name="Bateson M.M."/>
            <person name="Ward D.M."/>
            <person name="Heidelberg J.F."/>
        </authorList>
    </citation>
    <scope>NUCLEOTIDE SEQUENCE [LARGE SCALE GENOMIC DNA]</scope>
    <source>
        <strain>JA-2-3B'a(2-13)</strain>
    </source>
</reference>
<evidence type="ECO:0000255" key="1">
    <source>
        <dbReference type="HAMAP-Rule" id="MF_00022"/>
    </source>
</evidence>
<dbReference type="EC" id="6.1.1.17" evidence="1"/>
<dbReference type="EMBL" id="CP000240">
    <property type="protein sequence ID" value="ABD02639.1"/>
    <property type="molecule type" value="Genomic_DNA"/>
</dbReference>
<dbReference type="RefSeq" id="WP_011433283.1">
    <property type="nucleotide sequence ID" value="NC_007776.1"/>
</dbReference>
<dbReference type="SMR" id="Q2JKY3"/>
<dbReference type="STRING" id="321332.CYB_1680"/>
<dbReference type="KEGG" id="cyb:CYB_1680"/>
<dbReference type="eggNOG" id="COG0008">
    <property type="taxonomic scope" value="Bacteria"/>
</dbReference>
<dbReference type="HOGENOM" id="CLU_015768_6_0_3"/>
<dbReference type="OrthoDB" id="9807503at2"/>
<dbReference type="Proteomes" id="UP000001938">
    <property type="component" value="Chromosome"/>
</dbReference>
<dbReference type="GO" id="GO:0005829">
    <property type="term" value="C:cytosol"/>
    <property type="evidence" value="ECO:0007669"/>
    <property type="project" value="TreeGrafter"/>
</dbReference>
<dbReference type="GO" id="GO:0005524">
    <property type="term" value="F:ATP binding"/>
    <property type="evidence" value="ECO:0007669"/>
    <property type="project" value="UniProtKB-UniRule"/>
</dbReference>
<dbReference type="GO" id="GO:0004818">
    <property type="term" value="F:glutamate-tRNA ligase activity"/>
    <property type="evidence" value="ECO:0007669"/>
    <property type="project" value="UniProtKB-UniRule"/>
</dbReference>
<dbReference type="GO" id="GO:0000049">
    <property type="term" value="F:tRNA binding"/>
    <property type="evidence" value="ECO:0007669"/>
    <property type="project" value="InterPro"/>
</dbReference>
<dbReference type="GO" id="GO:0008270">
    <property type="term" value="F:zinc ion binding"/>
    <property type="evidence" value="ECO:0007669"/>
    <property type="project" value="InterPro"/>
</dbReference>
<dbReference type="GO" id="GO:0006424">
    <property type="term" value="P:glutamyl-tRNA aminoacylation"/>
    <property type="evidence" value="ECO:0007669"/>
    <property type="project" value="UniProtKB-UniRule"/>
</dbReference>
<dbReference type="CDD" id="cd00808">
    <property type="entry name" value="GluRS_core"/>
    <property type="match status" value="1"/>
</dbReference>
<dbReference type="FunFam" id="3.40.50.620:FF:000007">
    <property type="entry name" value="Glutamate--tRNA ligase"/>
    <property type="match status" value="1"/>
</dbReference>
<dbReference type="Gene3D" id="1.10.10.350">
    <property type="match status" value="1"/>
</dbReference>
<dbReference type="Gene3D" id="1.10.8.70">
    <property type="entry name" value="Glutamate-tRNA synthetase, class I, anticodon-binding domain 1"/>
    <property type="match status" value="1"/>
</dbReference>
<dbReference type="Gene3D" id="3.40.50.620">
    <property type="entry name" value="HUPs"/>
    <property type="match status" value="1"/>
</dbReference>
<dbReference type="HAMAP" id="MF_00022">
    <property type="entry name" value="Glu_tRNA_synth_type1"/>
    <property type="match status" value="1"/>
</dbReference>
<dbReference type="InterPro" id="IPR045462">
    <property type="entry name" value="aa-tRNA-synth_I_cd-bd"/>
</dbReference>
<dbReference type="InterPro" id="IPR020751">
    <property type="entry name" value="aa-tRNA-synth_I_codon-bd_sub2"/>
</dbReference>
<dbReference type="InterPro" id="IPR001412">
    <property type="entry name" value="aa-tRNA-synth_I_CS"/>
</dbReference>
<dbReference type="InterPro" id="IPR008925">
    <property type="entry name" value="aa_tRNA-synth_I_cd-bd_sf"/>
</dbReference>
<dbReference type="InterPro" id="IPR004527">
    <property type="entry name" value="Glu-tRNA-ligase_bac/mito"/>
</dbReference>
<dbReference type="InterPro" id="IPR020752">
    <property type="entry name" value="Glu-tRNA-synth_I_codon-bd_sub1"/>
</dbReference>
<dbReference type="InterPro" id="IPR000924">
    <property type="entry name" value="Glu/Gln-tRNA-synth"/>
</dbReference>
<dbReference type="InterPro" id="IPR020058">
    <property type="entry name" value="Glu/Gln-tRNA-synth_Ib_cat-dom"/>
</dbReference>
<dbReference type="InterPro" id="IPR049940">
    <property type="entry name" value="GluQ/Sye"/>
</dbReference>
<dbReference type="InterPro" id="IPR033910">
    <property type="entry name" value="GluRS_core"/>
</dbReference>
<dbReference type="InterPro" id="IPR014729">
    <property type="entry name" value="Rossmann-like_a/b/a_fold"/>
</dbReference>
<dbReference type="NCBIfam" id="TIGR00464">
    <property type="entry name" value="gltX_bact"/>
    <property type="match status" value="1"/>
</dbReference>
<dbReference type="NCBIfam" id="NF004315">
    <property type="entry name" value="PRK05710.1-4"/>
    <property type="match status" value="1"/>
</dbReference>
<dbReference type="PANTHER" id="PTHR43311">
    <property type="entry name" value="GLUTAMATE--TRNA LIGASE"/>
    <property type="match status" value="1"/>
</dbReference>
<dbReference type="PANTHER" id="PTHR43311:SF2">
    <property type="entry name" value="GLUTAMATE--TRNA LIGASE, MITOCHONDRIAL-RELATED"/>
    <property type="match status" value="1"/>
</dbReference>
<dbReference type="Pfam" id="PF19269">
    <property type="entry name" value="Anticodon_2"/>
    <property type="match status" value="1"/>
</dbReference>
<dbReference type="Pfam" id="PF00749">
    <property type="entry name" value="tRNA-synt_1c"/>
    <property type="match status" value="1"/>
</dbReference>
<dbReference type="PRINTS" id="PR00987">
    <property type="entry name" value="TRNASYNTHGLU"/>
</dbReference>
<dbReference type="SUPFAM" id="SSF48163">
    <property type="entry name" value="An anticodon-binding domain of class I aminoacyl-tRNA synthetases"/>
    <property type="match status" value="1"/>
</dbReference>
<dbReference type="SUPFAM" id="SSF52374">
    <property type="entry name" value="Nucleotidylyl transferase"/>
    <property type="match status" value="1"/>
</dbReference>
<dbReference type="PROSITE" id="PS00178">
    <property type="entry name" value="AA_TRNA_LIGASE_I"/>
    <property type="match status" value="1"/>
</dbReference>